<proteinExistence type="inferred from homology"/>
<accession>B7IUP2</accession>
<reference key="1">
    <citation type="submission" date="2008-10" db="EMBL/GenBank/DDBJ databases">
        <title>Genome sequence of Bacillus cereus G9842.</title>
        <authorList>
            <person name="Dodson R.J."/>
            <person name="Durkin A.S."/>
            <person name="Rosovitz M.J."/>
            <person name="Rasko D.A."/>
            <person name="Hoffmaster A."/>
            <person name="Ravel J."/>
            <person name="Sutton G."/>
        </authorList>
    </citation>
    <scope>NUCLEOTIDE SEQUENCE [LARGE SCALE GENOMIC DNA]</scope>
    <source>
        <strain>G9842</strain>
    </source>
</reference>
<protein>
    <recommendedName>
        <fullName evidence="1">Orotate phosphoribosyltransferase</fullName>
        <shortName evidence="1">OPRT</shortName>
        <shortName evidence="1">OPRTase</shortName>
        <ecNumber evidence="1">2.4.2.10</ecNumber>
    </recommendedName>
</protein>
<name>PYRE_BACC2</name>
<comment type="function">
    <text evidence="1">Catalyzes the transfer of a ribosyl phosphate group from 5-phosphoribose 1-diphosphate to orotate, leading to the formation of orotidine monophosphate (OMP).</text>
</comment>
<comment type="catalytic activity">
    <reaction evidence="1">
        <text>orotidine 5'-phosphate + diphosphate = orotate + 5-phospho-alpha-D-ribose 1-diphosphate</text>
        <dbReference type="Rhea" id="RHEA:10380"/>
        <dbReference type="ChEBI" id="CHEBI:30839"/>
        <dbReference type="ChEBI" id="CHEBI:33019"/>
        <dbReference type="ChEBI" id="CHEBI:57538"/>
        <dbReference type="ChEBI" id="CHEBI:58017"/>
        <dbReference type="EC" id="2.4.2.10"/>
    </reaction>
</comment>
<comment type="cofactor">
    <cofactor evidence="1">
        <name>Mg(2+)</name>
        <dbReference type="ChEBI" id="CHEBI:18420"/>
    </cofactor>
</comment>
<comment type="pathway">
    <text evidence="1">Pyrimidine metabolism; UMP biosynthesis via de novo pathway; UMP from orotate: step 1/2.</text>
</comment>
<comment type="subunit">
    <text evidence="1">Homodimer.</text>
</comment>
<comment type="similarity">
    <text evidence="1">Belongs to the purine/pyrimidine phosphoribosyltransferase family. PyrE subfamily.</text>
</comment>
<organism>
    <name type="scientific">Bacillus cereus (strain G9842)</name>
    <dbReference type="NCBI Taxonomy" id="405531"/>
    <lineage>
        <taxon>Bacteria</taxon>
        <taxon>Bacillati</taxon>
        <taxon>Bacillota</taxon>
        <taxon>Bacilli</taxon>
        <taxon>Bacillales</taxon>
        <taxon>Bacillaceae</taxon>
        <taxon>Bacillus</taxon>
        <taxon>Bacillus cereus group</taxon>
    </lineage>
</organism>
<evidence type="ECO:0000255" key="1">
    <source>
        <dbReference type="HAMAP-Rule" id="MF_01208"/>
    </source>
</evidence>
<keyword id="KW-0328">Glycosyltransferase</keyword>
<keyword id="KW-0460">Magnesium</keyword>
<keyword id="KW-0665">Pyrimidine biosynthesis</keyword>
<keyword id="KW-0808">Transferase</keyword>
<gene>
    <name evidence="1" type="primary">pyrE</name>
    <name type="ordered locus">BCG9842_B1261</name>
</gene>
<dbReference type="EC" id="2.4.2.10" evidence="1"/>
<dbReference type="EMBL" id="CP001186">
    <property type="protein sequence ID" value="ACK94229.1"/>
    <property type="molecule type" value="Genomic_DNA"/>
</dbReference>
<dbReference type="RefSeq" id="WP_000711454.1">
    <property type="nucleotide sequence ID" value="NC_011772.1"/>
</dbReference>
<dbReference type="SMR" id="B7IUP2"/>
<dbReference type="KEGG" id="bcg:BCG9842_B1261"/>
<dbReference type="HOGENOM" id="CLU_074878_1_1_9"/>
<dbReference type="UniPathway" id="UPA00070">
    <property type="reaction ID" value="UER00119"/>
</dbReference>
<dbReference type="Proteomes" id="UP000006744">
    <property type="component" value="Chromosome"/>
</dbReference>
<dbReference type="GO" id="GO:0000287">
    <property type="term" value="F:magnesium ion binding"/>
    <property type="evidence" value="ECO:0007669"/>
    <property type="project" value="UniProtKB-UniRule"/>
</dbReference>
<dbReference type="GO" id="GO:0004588">
    <property type="term" value="F:orotate phosphoribosyltransferase activity"/>
    <property type="evidence" value="ECO:0007669"/>
    <property type="project" value="UniProtKB-UniRule"/>
</dbReference>
<dbReference type="GO" id="GO:0044205">
    <property type="term" value="P:'de novo' UMP biosynthetic process"/>
    <property type="evidence" value="ECO:0007669"/>
    <property type="project" value="UniProtKB-UniRule"/>
</dbReference>
<dbReference type="GO" id="GO:0019856">
    <property type="term" value="P:pyrimidine nucleobase biosynthetic process"/>
    <property type="evidence" value="ECO:0007669"/>
    <property type="project" value="TreeGrafter"/>
</dbReference>
<dbReference type="CDD" id="cd06223">
    <property type="entry name" value="PRTases_typeI"/>
    <property type="match status" value="1"/>
</dbReference>
<dbReference type="Gene3D" id="3.40.50.2020">
    <property type="match status" value="1"/>
</dbReference>
<dbReference type="HAMAP" id="MF_01208">
    <property type="entry name" value="PyrE"/>
    <property type="match status" value="1"/>
</dbReference>
<dbReference type="InterPro" id="IPR023031">
    <property type="entry name" value="OPRT"/>
</dbReference>
<dbReference type="InterPro" id="IPR004467">
    <property type="entry name" value="Or_phspho_trans_dom"/>
</dbReference>
<dbReference type="InterPro" id="IPR000836">
    <property type="entry name" value="PRibTrfase_dom"/>
</dbReference>
<dbReference type="InterPro" id="IPR029057">
    <property type="entry name" value="PRTase-like"/>
</dbReference>
<dbReference type="NCBIfam" id="TIGR00336">
    <property type="entry name" value="pyrE"/>
    <property type="match status" value="1"/>
</dbReference>
<dbReference type="PANTHER" id="PTHR19278">
    <property type="entry name" value="OROTATE PHOSPHORIBOSYLTRANSFERASE"/>
    <property type="match status" value="1"/>
</dbReference>
<dbReference type="PANTHER" id="PTHR19278:SF9">
    <property type="entry name" value="URIDINE 5'-MONOPHOSPHATE SYNTHASE"/>
    <property type="match status" value="1"/>
</dbReference>
<dbReference type="Pfam" id="PF00156">
    <property type="entry name" value="Pribosyltran"/>
    <property type="match status" value="1"/>
</dbReference>
<dbReference type="SUPFAM" id="SSF53271">
    <property type="entry name" value="PRTase-like"/>
    <property type="match status" value="1"/>
</dbReference>
<dbReference type="PROSITE" id="PS00103">
    <property type="entry name" value="PUR_PYR_PR_TRANSFER"/>
    <property type="match status" value="1"/>
</dbReference>
<feature type="chain" id="PRO_1000138761" description="Orotate phosphoribosyltransferase">
    <location>
        <begin position="1"/>
        <end position="210"/>
    </location>
</feature>
<feature type="binding site" evidence="1">
    <location>
        <position position="94"/>
    </location>
    <ligand>
        <name>5-phospho-alpha-D-ribose 1-diphosphate</name>
        <dbReference type="ChEBI" id="CHEBI:58017"/>
        <note>ligand shared between dimeric partners</note>
    </ligand>
</feature>
<feature type="binding site" evidence="1">
    <location>
        <position position="98"/>
    </location>
    <ligand>
        <name>5-phospho-alpha-D-ribose 1-diphosphate</name>
        <dbReference type="ChEBI" id="CHEBI:58017"/>
        <note>ligand shared between dimeric partners</note>
    </ligand>
</feature>
<feature type="binding site" evidence="1">
    <location>
        <position position="100"/>
    </location>
    <ligand>
        <name>5-phospho-alpha-D-ribose 1-diphosphate</name>
        <dbReference type="ChEBI" id="CHEBI:58017"/>
        <note>ligand shared between dimeric partners</note>
    </ligand>
</feature>
<feature type="binding site" description="in other chain" evidence="1">
    <location>
        <begin position="120"/>
        <end position="128"/>
    </location>
    <ligand>
        <name>5-phospho-alpha-D-ribose 1-diphosphate</name>
        <dbReference type="ChEBI" id="CHEBI:58017"/>
        <note>ligand shared between dimeric partners</note>
    </ligand>
</feature>
<feature type="binding site" evidence="1">
    <location>
        <position position="124"/>
    </location>
    <ligand>
        <name>orotate</name>
        <dbReference type="ChEBI" id="CHEBI:30839"/>
    </ligand>
</feature>
<sequence length="210" mass="22718">MKKEIASHLLEIGAVFLQPNDPFTWSSGMKSPIYCDNRLTLSYPKVRQAIAAGLEELIKEHFPTVEVIAGTATAGIAHAAWVSDRMDLPMCYVRSKAKGHGKGNQIEGKAEKGQKVVVVEDLISTGGSAITCVEALREAGCEVLGIVSIFTYELESGKEKLEAANVASYSLSDYSALTEVAAEKGMIGQAETKKLQEWRKNPADEAWITA</sequence>